<evidence type="ECO:0000255" key="1"/>
<evidence type="ECO:0000305" key="2"/>
<feature type="chain" id="PRO_0000159326" description="Probable Ni/Fe-hydrogenase 2 b-type cytochrome subunit">
    <location>
        <begin position="1"/>
        <end position="392"/>
    </location>
</feature>
<feature type="topological domain" description="Periplasmic" evidence="1">
    <location>
        <begin position="1"/>
        <end position="11"/>
    </location>
</feature>
<feature type="transmembrane region" description="Helical" evidence="1">
    <location>
        <begin position="12"/>
        <end position="32"/>
    </location>
</feature>
<feature type="topological domain" description="Cytoplasmic" evidence="1">
    <location>
        <begin position="33"/>
        <end position="34"/>
    </location>
</feature>
<feature type="transmembrane region" description="Helical" evidence="1">
    <location>
        <begin position="35"/>
        <end position="55"/>
    </location>
</feature>
<feature type="topological domain" description="Periplasmic" evidence="1">
    <location>
        <begin position="56"/>
        <end position="58"/>
    </location>
</feature>
<feature type="transmembrane region" description="Helical" evidence="1">
    <location>
        <begin position="59"/>
        <end position="79"/>
    </location>
</feature>
<feature type="topological domain" description="Cytoplasmic" evidence="1">
    <location>
        <begin position="80"/>
        <end position="90"/>
    </location>
</feature>
<feature type="transmembrane region" description="Helical" evidence="1">
    <location>
        <begin position="91"/>
        <end position="111"/>
    </location>
</feature>
<feature type="topological domain" description="Periplasmic" evidence="1">
    <location>
        <begin position="112"/>
        <end position="133"/>
    </location>
</feature>
<feature type="transmembrane region" description="Helical" evidence="1">
    <location>
        <begin position="134"/>
        <end position="154"/>
    </location>
</feature>
<feature type="topological domain" description="Cytoplasmic" evidence="1">
    <location>
        <begin position="155"/>
        <end position="168"/>
    </location>
</feature>
<feature type="transmembrane region" description="Helical" evidence="1">
    <location>
        <begin position="169"/>
        <end position="189"/>
    </location>
</feature>
<feature type="topological domain" description="Periplasmic" evidence="1">
    <location>
        <begin position="190"/>
        <end position="207"/>
    </location>
</feature>
<feature type="transmembrane region" description="Helical" evidence="1">
    <location>
        <begin position="208"/>
        <end position="228"/>
    </location>
</feature>
<feature type="topological domain" description="Cytoplasmic" evidence="1">
    <location>
        <begin position="229"/>
        <end position="249"/>
    </location>
</feature>
<feature type="transmembrane region" description="Helical" evidence="1">
    <location>
        <begin position="250"/>
        <end position="270"/>
    </location>
</feature>
<feature type="topological domain" description="Periplasmic" evidence="1">
    <location>
        <begin position="271"/>
        <end position="281"/>
    </location>
</feature>
<feature type="transmembrane region" description="Helical" evidence="1">
    <location>
        <begin position="282"/>
        <end position="302"/>
    </location>
</feature>
<feature type="topological domain" description="Cytoplasmic" evidence="1">
    <location>
        <begin position="303"/>
        <end position="333"/>
    </location>
</feature>
<feature type="transmembrane region" description="Helical" evidence="1">
    <location>
        <begin position="334"/>
        <end position="354"/>
    </location>
</feature>
<feature type="topological domain" description="Periplasmic" evidence="1">
    <location>
        <position position="355"/>
    </location>
</feature>
<feature type="transmembrane region" description="Helical" evidence="1">
    <location>
        <begin position="356"/>
        <end position="376"/>
    </location>
</feature>
<feature type="topological domain" description="Cytoplasmic" evidence="1">
    <location>
        <begin position="377"/>
        <end position="392"/>
    </location>
</feature>
<feature type="sequence conflict" description="In Ref. 1; AAA21590/AAA69162." evidence="2" ref="1">
    <original>KL</original>
    <variation>NV</variation>
    <location>
        <begin position="306"/>
        <end position="307"/>
    </location>
</feature>
<name>HYBB_ECOLI</name>
<comment type="function">
    <text>Probable b-type cytochrome.</text>
</comment>
<comment type="subcellular location">
    <subcellularLocation>
        <location>Cell inner membrane</location>
        <topology>Multi-pass membrane protein</topology>
    </subcellularLocation>
</comment>
<comment type="similarity">
    <text evidence="2">Belongs to the NrfD family.</text>
</comment>
<sequence>MSHDPQPLGGKIISKPVMIFGPLIVICMLLIVKRLVFGLGSVSDLNGGFPWGVWIAFDLLIGTGFACGGWALAWAVYVFNRGQYHPLVRPALLASLFGYSLGGLSITIDVGRYWNLPYFYIPGHFNVNSVLFETAVCMTIYIGVMALEFAPALFERLGWKVSLQRLNKVMFFIIALGALLPTMHQSSMGSLMISAGYKVHPLWQSYEMLPLFSLLTAFIMGFSIVIFEGSLVQAGLRGNGPDEKSLFVKLTNTISVLLAIFIVLRFGELIYRDKLSLAFAGDFYSVMFWIEVLLMLFPLVVLRVAKLRNDSRMLFLSALSALLGCATWRLTYSLVAFNPGGGYAYFPTWEELLISIGFVAIEICAYIVLIRLLPILPPLKQNDHNRHEASKA</sequence>
<reference key="1">
    <citation type="journal article" date="1994" name="J. Bacteriol.">
        <title>Cloning, sequencing, and mutational analysis of the hyb operon encoding Escherichia coli hydrogenase 2.</title>
        <authorList>
            <person name="Menon N.K."/>
            <person name="Chatelus C.Y."/>
            <person name="Dervartanian M."/>
            <person name="Wendt J.C."/>
            <person name="Shanmugam K.T."/>
            <person name="Peck H.D. Jr."/>
            <person name="Przybyla A.E."/>
        </authorList>
    </citation>
    <scope>NUCLEOTIDE SEQUENCE [GENOMIC DNA]</scope>
    <source>
        <strain>K12 / TG1</strain>
    </source>
</reference>
<reference key="2">
    <citation type="journal article" date="1997" name="Science">
        <title>The complete genome sequence of Escherichia coli K-12.</title>
        <authorList>
            <person name="Blattner F.R."/>
            <person name="Plunkett G. III"/>
            <person name="Bloch C.A."/>
            <person name="Perna N.T."/>
            <person name="Burland V."/>
            <person name="Riley M."/>
            <person name="Collado-Vides J."/>
            <person name="Glasner J.D."/>
            <person name="Rode C.K."/>
            <person name="Mayhew G.F."/>
            <person name="Gregor J."/>
            <person name="Davis N.W."/>
            <person name="Kirkpatrick H.A."/>
            <person name="Goeden M.A."/>
            <person name="Rose D.J."/>
            <person name="Mau B."/>
            <person name="Shao Y."/>
        </authorList>
    </citation>
    <scope>NUCLEOTIDE SEQUENCE [LARGE SCALE GENOMIC DNA]</scope>
    <source>
        <strain>K12 / MG1655 / ATCC 47076</strain>
    </source>
</reference>
<reference key="3">
    <citation type="journal article" date="2006" name="Mol. Syst. Biol.">
        <title>Highly accurate genome sequences of Escherichia coli K-12 strains MG1655 and W3110.</title>
        <authorList>
            <person name="Hayashi K."/>
            <person name="Morooka N."/>
            <person name="Yamamoto Y."/>
            <person name="Fujita K."/>
            <person name="Isono K."/>
            <person name="Choi S."/>
            <person name="Ohtsubo E."/>
            <person name="Baba T."/>
            <person name="Wanner B.L."/>
            <person name="Mori H."/>
            <person name="Horiuchi T."/>
        </authorList>
    </citation>
    <scope>NUCLEOTIDE SEQUENCE [LARGE SCALE GENOMIC DNA]</scope>
    <source>
        <strain>K12 / W3110 / ATCC 27325 / DSM 5911</strain>
    </source>
</reference>
<reference key="4">
    <citation type="journal article" date="2005" name="Science">
        <title>Global topology analysis of the Escherichia coli inner membrane proteome.</title>
        <authorList>
            <person name="Daley D.O."/>
            <person name="Rapp M."/>
            <person name="Granseth E."/>
            <person name="Melen K."/>
            <person name="Drew D."/>
            <person name="von Heijne G."/>
        </authorList>
    </citation>
    <scope>TOPOLOGY [LARGE SCALE ANALYSIS]</scope>
    <source>
        <strain>K12 / MG1655 / ATCC 47076</strain>
    </source>
</reference>
<proteinExistence type="evidence at protein level"/>
<dbReference type="EMBL" id="U09177">
    <property type="protein sequence ID" value="AAA21590.1"/>
    <property type="molecule type" value="Genomic_DNA"/>
</dbReference>
<dbReference type="EMBL" id="U28377">
    <property type="protein sequence ID" value="AAA69162.1"/>
    <property type="status" value="ALT_SEQ"/>
    <property type="molecule type" value="Genomic_DNA"/>
</dbReference>
<dbReference type="EMBL" id="U00096">
    <property type="protein sequence ID" value="AAC76031.1"/>
    <property type="molecule type" value="Genomic_DNA"/>
</dbReference>
<dbReference type="EMBL" id="AP009048">
    <property type="protein sequence ID" value="BAE77056.1"/>
    <property type="molecule type" value="Genomic_DNA"/>
</dbReference>
<dbReference type="PIR" id="A65086">
    <property type="entry name" value="A65086"/>
</dbReference>
<dbReference type="RefSeq" id="NP_417469.1">
    <property type="nucleotide sequence ID" value="NC_000913.3"/>
</dbReference>
<dbReference type="RefSeq" id="WP_000017703.1">
    <property type="nucleotide sequence ID" value="NZ_STEB01000001.1"/>
</dbReference>
<dbReference type="SMR" id="P37180"/>
<dbReference type="BioGRID" id="4262376">
    <property type="interactions" value="7"/>
</dbReference>
<dbReference type="ComplexPortal" id="CPX-282">
    <property type="entry name" value="Hydrogenase-2 complex"/>
</dbReference>
<dbReference type="FunCoup" id="P37180">
    <property type="interactions" value="10"/>
</dbReference>
<dbReference type="STRING" id="511145.b2995"/>
<dbReference type="TCDB" id="3.D.7.2.5">
    <property type="family name" value="the h2:heterodisulfide oxidoreductase (hho) family"/>
</dbReference>
<dbReference type="PaxDb" id="511145-b2995"/>
<dbReference type="EnsemblBacteria" id="AAC76031">
    <property type="protein sequence ID" value="AAC76031"/>
    <property type="gene ID" value="b2995"/>
</dbReference>
<dbReference type="GeneID" id="948615"/>
<dbReference type="KEGG" id="ecj:JW5494"/>
<dbReference type="KEGG" id="eco:b2995"/>
<dbReference type="KEGG" id="ecoc:C3026_16380"/>
<dbReference type="PATRIC" id="fig|1411691.4.peg.3734"/>
<dbReference type="EchoBASE" id="EB1748"/>
<dbReference type="eggNOG" id="COG5557">
    <property type="taxonomic scope" value="Bacteria"/>
</dbReference>
<dbReference type="HOGENOM" id="CLU_049007_0_0_6"/>
<dbReference type="InParanoid" id="P37180"/>
<dbReference type="OMA" id="AIEVCAY"/>
<dbReference type="OrthoDB" id="104998at2"/>
<dbReference type="PhylomeDB" id="P37180"/>
<dbReference type="BioCyc" id="EcoCyc:EG11800-MONOMER"/>
<dbReference type="BioCyc" id="MetaCyc:EG11800-MONOMER"/>
<dbReference type="PRO" id="PR:P37180"/>
<dbReference type="Proteomes" id="UP000000625">
    <property type="component" value="Chromosome"/>
</dbReference>
<dbReference type="GO" id="GO:0044569">
    <property type="term" value="C:[Ni-Fe] hydrogenase complex"/>
    <property type="evidence" value="ECO:0000303"/>
    <property type="project" value="ComplexPortal"/>
</dbReference>
<dbReference type="GO" id="GO:0005886">
    <property type="term" value="C:plasma membrane"/>
    <property type="evidence" value="ECO:0000314"/>
    <property type="project" value="ComplexPortal"/>
</dbReference>
<dbReference type="GO" id="GO:0046872">
    <property type="term" value="F:metal ion binding"/>
    <property type="evidence" value="ECO:0007669"/>
    <property type="project" value="UniProtKB-KW"/>
</dbReference>
<dbReference type="GO" id="GO:0019645">
    <property type="term" value="P:anaerobic electron transport chain"/>
    <property type="evidence" value="ECO:0000314"/>
    <property type="project" value="ComplexPortal"/>
</dbReference>
<dbReference type="GO" id="GO:0009061">
    <property type="term" value="P:anaerobic respiration"/>
    <property type="evidence" value="ECO:0000314"/>
    <property type="project" value="ComplexPortal"/>
</dbReference>
<dbReference type="InterPro" id="IPR051817">
    <property type="entry name" value="FDH_cytochrome_b556_subunit"/>
</dbReference>
<dbReference type="InterPro" id="IPR005614">
    <property type="entry name" value="NrfD-like"/>
</dbReference>
<dbReference type="NCBIfam" id="NF008133">
    <property type="entry name" value="PRK10881.1"/>
    <property type="match status" value="1"/>
</dbReference>
<dbReference type="PANTHER" id="PTHR30074">
    <property type="entry name" value="FORMATE DEHYDROGENASE, NITRATE-INDUCIBLE, CYTOCHROME B556 FDN SUBUNIT"/>
    <property type="match status" value="1"/>
</dbReference>
<dbReference type="PANTHER" id="PTHR30074:SF4">
    <property type="entry name" value="NI_FE-HYDROGENASE 2 B-TYPE CYTOCHROME SUBUNIT-RELATED"/>
    <property type="match status" value="1"/>
</dbReference>
<dbReference type="Pfam" id="PF03916">
    <property type="entry name" value="NrfD"/>
    <property type="match status" value="1"/>
</dbReference>
<keyword id="KW-0997">Cell inner membrane</keyword>
<keyword id="KW-1003">Cell membrane</keyword>
<keyword id="KW-0249">Electron transport</keyword>
<keyword id="KW-0349">Heme</keyword>
<keyword id="KW-0408">Iron</keyword>
<keyword id="KW-0472">Membrane</keyword>
<keyword id="KW-0479">Metal-binding</keyword>
<keyword id="KW-1185">Reference proteome</keyword>
<keyword id="KW-0812">Transmembrane</keyword>
<keyword id="KW-1133">Transmembrane helix</keyword>
<keyword id="KW-0813">Transport</keyword>
<protein>
    <recommendedName>
        <fullName>Probable Ni/Fe-hydrogenase 2 b-type cytochrome subunit</fullName>
    </recommendedName>
</protein>
<accession>P37180</accession>
<accession>Q2M9K0</accession>
<organism>
    <name type="scientific">Escherichia coli (strain K12)</name>
    <dbReference type="NCBI Taxonomy" id="83333"/>
    <lineage>
        <taxon>Bacteria</taxon>
        <taxon>Pseudomonadati</taxon>
        <taxon>Pseudomonadota</taxon>
        <taxon>Gammaproteobacteria</taxon>
        <taxon>Enterobacterales</taxon>
        <taxon>Enterobacteriaceae</taxon>
        <taxon>Escherichia</taxon>
    </lineage>
</organism>
<gene>
    <name type="primary">hybB</name>
    <name type="ordered locus">b2995</name>
    <name type="ordered locus">JW5494</name>
</gene>